<dbReference type="EC" id="2.3.2.27" evidence="4"/>
<dbReference type="EMBL" id="FJ820118">
    <property type="protein sequence ID" value="ACO38702.1"/>
    <property type="molecule type" value="mRNA"/>
</dbReference>
<dbReference type="EMBL" id="AC002332">
    <property type="protein sequence ID" value="AAB80652.1"/>
    <property type="status" value="ALT_SEQ"/>
    <property type="molecule type" value="Genomic_DNA"/>
</dbReference>
<dbReference type="EMBL" id="CP002685">
    <property type="protein sequence ID" value="AEC08817.1"/>
    <property type="molecule type" value="Genomic_DNA"/>
</dbReference>
<dbReference type="EMBL" id="CP002685">
    <property type="protein sequence ID" value="AEC08818.1"/>
    <property type="molecule type" value="Genomic_DNA"/>
</dbReference>
<dbReference type="EMBL" id="AY080868">
    <property type="status" value="NOT_ANNOTATED_CDS"/>
    <property type="molecule type" value="mRNA"/>
</dbReference>
<dbReference type="PIR" id="C84744">
    <property type="entry name" value="C84744"/>
</dbReference>
<dbReference type="RefSeq" id="NP_850206.4">
    <molecule id="O22785-1"/>
    <property type="nucleotide sequence ID" value="NM_179875.7"/>
</dbReference>
<dbReference type="RefSeq" id="NP_850207.4">
    <molecule id="O22785-1"/>
    <property type="nucleotide sequence ID" value="NM_179876.5"/>
</dbReference>
<dbReference type="SMR" id="O22785"/>
<dbReference type="BioGRID" id="3244">
    <property type="interactions" value="40"/>
</dbReference>
<dbReference type="FunCoup" id="O22785">
    <property type="interactions" value="5127"/>
</dbReference>
<dbReference type="IntAct" id="O22785">
    <property type="interactions" value="3"/>
</dbReference>
<dbReference type="STRING" id="3702.O22785"/>
<dbReference type="iPTMnet" id="O22785"/>
<dbReference type="PaxDb" id="3702-AT2G33340.1"/>
<dbReference type="ProteomicsDB" id="234842">
    <molecule id="O22785-1"/>
</dbReference>
<dbReference type="EnsemblPlants" id="AT2G33340.1">
    <molecule id="O22785-1"/>
    <property type="protein sequence ID" value="AT2G33340.1"/>
    <property type="gene ID" value="AT2G33340"/>
</dbReference>
<dbReference type="EnsemblPlants" id="AT2G33340.2">
    <molecule id="O22785-1"/>
    <property type="protein sequence ID" value="AT2G33340.2"/>
    <property type="gene ID" value="AT2G33340"/>
</dbReference>
<dbReference type="GeneID" id="817897"/>
<dbReference type="Gramene" id="AT2G33340.1">
    <molecule id="O22785-1"/>
    <property type="protein sequence ID" value="AT2G33340.1"/>
    <property type="gene ID" value="AT2G33340"/>
</dbReference>
<dbReference type="Gramene" id="AT2G33340.2">
    <molecule id="O22785-1"/>
    <property type="protein sequence ID" value="AT2G33340.2"/>
    <property type="gene ID" value="AT2G33340"/>
</dbReference>
<dbReference type="KEGG" id="ath:AT2G33340"/>
<dbReference type="Araport" id="AT2G33340"/>
<dbReference type="TAIR" id="AT2G33340">
    <property type="gene designation" value="MAC3B"/>
</dbReference>
<dbReference type="eggNOG" id="KOG0289">
    <property type="taxonomic scope" value="Eukaryota"/>
</dbReference>
<dbReference type="HOGENOM" id="CLU_023894_1_0_1"/>
<dbReference type="InParanoid" id="O22785"/>
<dbReference type="OMA" id="VIYQFNT"/>
<dbReference type="PhylomeDB" id="O22785"/>
<dbReference type="UniPathway" id="UPA00143"/>
<dbReference type="CD-CODE" id="4299E36E">
    <property type="entry name" value="Nucleolus"/>
</dbReference>
<dbReference type="PRO" id="PR:O22785"/>
<dbReference type="Proteomes" id="UP000006548">
    <property type="component" value="Chromosome 2"/>
</dbReference>
<dbReference type="ExpressionAtlas" id="O22785">
    <property type="expression patterns" value="baseline and differential"/>
</dbReference>
<dbReference type="GO" id="GO:0080008">
    <property type="term" value="C:Cul4-RING E3 ubiquitin ligase complex"/>
    <property type="evidence" value="ECO:0000250"/>
    <property type="project" value="TAIR"/>
</dbReference>
<dbReference type="GO" id="GO:0005783">
    <property type="term" value="C:endoplasmic reticulum"/>
    <property type="evidence" value="ECO:0007005"/>
    <property type="project" value="TAIR"/>
</dbReference>
<dbReference type="GO" id="GO:0005634">
    <property type="term" value="C:nucleus"/>
    <property type="evidence" value="ECO:0000250"/>
    <property type="project" value="UniProtKB"/>
</dbReference>
<dbReference type="GO" id="GO:0009505">
    <property type="term" value="C:plant-type cell wall"/>
    <property type="evidence" value="ECO:0007005"/>
    <property type="project" value="TAIR"/>
</dbReference>
<dbReference type="GO" id="GO:0000974">
    <property type="term" value="C:Prp19 complex"/>
    <property type="evidence" value="ECO:0007669"/>
    <property type="project" value="InterPro"/>
</dbReference>
<dbReference type="GO" id="GO:0005681">
    <property type="term" value="C:spliceosomal complex"/>
    <property type="evidence" value="ECO:0007669"/>
    <property type="project" value="UniProtKB-KW"/>
</dbReference>
<dbReference type="GO" id="GO:0061630">
    <property type="term" value="F:ubiquitin protein ligase activity"/>
    <property type="evidence" value="ECO:0000250"/>
    <property type="project" value="UniProtKB"/>
</dbReference>
<dbReference type="GO" id="GO:0042742">
    <property type="term" value="P:defense response to bacterium"/>
    <property type="evidence" value="ECO:0000316"/>
    <property type="project" value="TAIR"/>
</dbReference>
<dbReference type="GO" id="GO:0006281">
    <property type="term" value="P:DNA repair"/>
    <property type="evidence" value="ECO:0007669"/>
    <property type="project" value="UniProtKB-KW"/>
</dbReference>
<dbReference type="GO" id="GO:0045087">
    <property type="term" value="P:innate immune response"/>
    <property type="evidence" value="ECO:0007669"/>
    <property type="project" value="UniProtKB-KW"/>
</dbReference>
<dbReference type="GO" id="GO:0000398">
    <property type="term" value="P:mRNA splicing, via spliceosome"/>
    <property type="evidence" value="ECO:0007669"/>
    <property type="project" value="InterPro"/>
</dbReference>
<dbReference type="GO" id="GO:0070534">
    <property type="term" value="P:protein K63-linked ubiquitination"/>
    <property type="evidence" value="ECO:0000250"/>
    <property type="project" value="UniProtKB"/>
</dbReference>
<dbReference type="CDD" id="cd16656">
    <property type="entry name" value="RING-Ubox_PRP19"/>
    <property type="match status" value="1"/>
</dbReference>
<dbReference type="CDD" id="cd00200">
    <property type="entry name" value="WD40"/>
    <property type="match status" value="1"/>
</dbReference>
<dbReference type="FunFam" id="2.130.10.10:FF:000043">
    <property type="entry name" value="pre-mRNA-processing factor 19"/>
    <property type="match status" value="1"/>
</dbReference>
<dbReference type="FunFam" id="3.30.40.10:FF:000027">
    <property type="entry name" value="Pre-mRNA-processing factor 19, putative"/>
    <property type="match status" value="1"/>
</dbReference>
<dbReference type="Gene3D" id="2.130.10.10">
    <property type="entry name" value="YVTN repeat-like/Quinoprotein amine dehydrogenase"/>
    <property type="match status" value="1"/>
</dbReference>
<dbReference type="Gene3D" id="3.30.40.10">
    <property type="entry name" value="Zinc/RING finger domain, C3HC4 (zinc finger)"/>
    <property type="match status" value="1"/>
</dbReference>
<dbReference type="InterPro" id="IPR013915">
    <property type="entry name" value="Pre-mRNA_splic_Prp19_cc"/>
</dbReference>
<dbReference type="InterPro" id="IPR038959">
    <property type="entry name" value="Prp19"/>
</dbReference>
<dbReference type="InterPro" id="IPR055340">
    <property type="entry name" value="RING-Ubox_PRP19"/>
</dbReference>
<dbReference type="InterPro" id="IPR003613">
    <property type="entry name" value="Ubox_domain"/>
</dbReference>
<dbReference type="InterPro" id="IPR015943">
    <property type="entry name" value="WD40/YVTN_repeat-like_dom_sf"/>
</dbReference>
<dbReference type="InterPro" id="IPR036322">
    <property type="entry name" value="WD40_repeat_dom_sf"/>
</dbReference>
<dbReference type="InterPro" id="IPR001680">
    <property type="entry name" value="WD40_rpt"/>
</dbReference>
<dbReference type="InterPro" id="IPR013083">
    <property type="entry name" value="Znf_RING/FYVE/PHD"/>
</dbReference>
<dbReference type="PANTHER" id="PTHR43995">
    <property type="entry name" value="PRE-MRNA-PROCESSING FACTOR 19"/>
    <property type="match status" value="1"/>
</dbReference>
<dbReference type="PANTHER" id="PTHR43995:SF3">
    <property type="entry name" value="PRE-MRNA-PROCESSING FACTOR 19 HOMOLOG 2"/>
    <property type="match status" value="1"/>
</dbReference>
<dbReference type="Pfam" id="PF08606">
    <property type="entry name" value="Prp19"/>
    <property type="match status" value="1"/>
</dbReference>
<dbReference type="Pfam" id="PF24814">
    <property type="entry name" value="WD40_Prp19"/>
    <property type="match status" value="1"/>
</dbReference>
<dbReference type="SMART" id="SM00504">
    <property type="entry name" value="Ubox"/>
    <property type="match status" value="1"/>
</dbReference>
<dbReference type="SMART" id="SM00320">
    <property type="entry name" value="WD40"/>
    <property type="match status" value="7"/>
</dbReference>
<dbReference type="SUPFAM" id="SSF57850">
    <property type="entry name" value="RING/U-box"/>
    <property type="match status" value="1"/>
</dbReference>
<dbReference type="SUPFAM" id="SSF50978">
    <property type="entry name" value="WD40 repeat-like"/>
    <property type="match status" value="1"/>
</dbReference>
<dbReference type="PROSITE" id="PS51698">
    <property type="entry name" value="U_BOX"/>
    <property type="match status" value="1"/>
</dbReference>
<dbReference type="PROSITE" id="PS50082">
    <property type="entry name" value="WD_REPEATS_2"/>
    <property type="match status" value="4"/>
</dbReference>
<dbReference type="PROSITE" id="PS50294">
    <property type="entry name" value="WD_REPEATS_REGION"/>
    <property type="match status" value="1"/>
</dbReference>
<feature type="chain" id="PRO_0000322138" description="Pre-mRNA-processing factor 19 homolog 2">
    <location>
        <begin position="1"/>
        <end position="525"/>
    </location>
</feature>
<feature type="domain" description="U-box">
    <location>
        <begin position="1"/>
        <end position="70"/>
    </location>
</feature>
<feature type="repeat" description="WD 1">
    <location>
        <begin position="220"/>
        <end position="261"/>
    </location>
</feature>
<feature type="repeat" description="WD 2">
    <location>
        <begin position="262"/>
        <end position="301"/>
    </location>
</feature>
<feature type="repeat" description="WD 3">
    <location>
        <begin position="307"/>
        <end position="346"/>
    </location>
</feature>
<feature type="repeat" description="WD 4">
    <location>
        <begin position="351"/>
        <end position="390"/>
    </location>
</feature>
<feature type="repeat" description="WD 5">
    <location>
        <begin position="393"/>
        <end position="431"/>
    </location>
</feature>
<feature type="repeat" description="WD 6">
    <location>
        <begin position="433"/>
        <end position="469"/>
    </location>
</feature>
<feature type="repeat" description="WD 7">
    <location>
        <begin position="478"/>
        <end position="517"/>
    </location>
</feature>
<feature type="short sequence motif" description="DWD box">
    <location>
        <begin position="409"/>
        <end position="424"/>
    </location>
</feature>
<evidence type="ECO:0000250" key="1"/>
<evidence type="ECO:0000250" key="2">
    <source>
        <dbReference type="UniProtKB" id="P32523"/>
    </source>
</evidence>
<evidence type="ECO:0000250" key="3">
    <source>
        <dbReference type="UniProtKB" id="Q9UMS4"/>
    </source>
</evidence>
<evidence type="ECO:0000269" key="4">
    <source>
    </source>
</evidence>
<evidence type="ECO:0000269" key="5">
    <source>
    </source>
</evidence>
<evidence type="ECO:0000305" key="6"/>
<gene>
    <name type="primary">PRP19B</name>
    <name type="synonym">MAC3B</name>
    <name type="synonym">PUB60</name>
    <name type="ordered locus">At2g33340</name>
    <name type="ORF">F4P9.11</name>
</gene>
<name>PR19B_ARATH</name>
<reference key="1">
    <citation type="journal article" date="2009" name="PLoS Pathog.">
        <title>Two Prp19-like U-box proteins in the MOS4-associated complex play redundant roles in plant innate immunity.</title>
        <authorList>
            <person name="Monaghan J."/>
            <person name="Xu F."/>
            <person name="Gao M."/>
            <person name="Zhao Q."/>
            <person name="Palma K."/>
            <person name="Long C."/>
            <person name="Chen S."/>
            <person name="Zhang Y."/>
            <person name="Li X."/>
        </authorList>
    </citation>
    <scope>NUCLEOTIDE SEQUENCE [MRNA]</scope>
    <scope>IDENTIFICATION BY MASS SPECTROMETRY</scope>
    <scope>FUNCTION</scope>
    <scope>SUBCELLULAR LOCATION</scope>
    <scope>COMPONENT OF THE MAC COMPLEX</scope>
    <source>
        <strain>cv. Columbia</strain>
    </source>
</reference>
<reference key="2">
    <citation type="journal article" date="1999" name="Nature">
        <title>Sequence and analysis of chromosome 2 of the plant Arabidopsis thaliana.</title>
        <authorList>
            <person name="Lin X."/>
            <person name="Kaul S."/>
            <person name="Rounsley S.D."/>
            <person name="Shea T.P."/>
            <person name="Benito M.-I."/>
            <person name="Town C.D."/>
            <person name="Fujii C.Y."/>
            <person name="Mason T.M."/>
            <person name="Bowman C.L."/>
            <person name="Barnstead M.E."/>
            <person name="Feldblyum T.V."/>
            <person name="Buell C.R."/>
            <person name="Ketchum K.A."/>
            <person name="Lee J.J."/>
            <person name="Ronning C.M."/>
            <person name="Koo H.L."/>
            <person name="Moffat K.S."/>
            <person name="Cronin L.A."/>
            <person name="Shen M."/>
            <person name="Pai G."/>
            <person name="Van Aken S."/>
            <person name="Umayam L."/>
            <person name="Tallon L.J."/>
            <person name="Gill J.E."/>
            <person name="Adams M.D."/>
            <person name="Carrera A.J."/>
            <person name="Creasy T.H."/>
            <person name="Goodman H.M."/>
            <person name="Somerville C.R."/>
            <person name="Copenhaver G.P."/>
            <person name="Preuss D."/>
            <person name="Nierman W.C."/>
            <person name="White O."/>
            <person name="Eisen J.A."/>
            <person name="Salzberg S.L."/>
            <person name="Fraser C.M."/>
            <person name="Venter J.C."/>
        </authorList>
    </citation>
    <scope>NUCLEOTIDE SEQUENCE [LARGE SCALE GENOMIC DNA]</scope>
    <source>
        <strain>cv. Columbia</strain>
    </source>
</reference>
<reference key="3">
    <citation type="journal article" date="2017" name="Plant J.">
        <title>Araport11: a complete reannotation of the Arabidopsis thaliana reference genome.</title>
        <authorList>
            <person name="Cheng C.Y."/>
            <person name="Krishnakumar V."/>
            <person name="Chan A.P."/>
            <person name="Thibaud-Nissen F."/>
            <person name="Schobel S."/>
            <person name="Town C.D."/>
        </authorList>
    </citation>
    <scope>GENOME REANNOTATION</scope>
    <source>
        <strain>cv. Columbia</strain>
    </source>
</reference>
<reference key="4">
    <citation type="journal article" date="2003" name="Science">
        <title>Empirical analysis of transcriptional activity in the Arabidopsis genome.</title>
        <authorList>
            <person name="Yamada K."/>
            <person name="Lim J."/>
            <person name="Dale J.M."/>
            <person name="Chen H."/>
            <person name="Shinn P."/>
            <person name="Palm C.J."/>
            <person name="Southwick A.M."/>
            <person name="Wu H.C."/>
            <person name="Kim C.J."/>
            <person name="Nguyen M."/>
            <person name="Pham P.K."/>
            <person name="Cheuk R.F."/>
            <person name="Karlin-Newmann G."/>
            <person name="Liu S.X."/>
            <person name="Lam B."/>
            <person name="Sakano H."/>
            <person name="Wu T."/>
            <person name="Yu G."/>
            <person name="Miranda M."/>
            <person name="Quach H.L."/>
            <person name="Tripp M."/>
            <person name="Chang C.H."/>
            <person name="Lee J.M."/>
            <person name="Toriumi M.J."/>
            <person name="Chan M.M."/>
            <person name="Tang C.C."/>
            <person name="Onodera C.S."/>
            <person name="Deng J.M."/>
            <person name="Akiyama K."/>
            <person name="Ansari Y."/>
            <person name="Arakawa T."/>
            <person name="Banh J."/>
            <person name="Banno F."/>
            <person name="Bowser L."/>
            <person name="Brooks S.Y."/>
            <person name="Carninci P."/>
            <person name="Chao Q."/>
            <person name="Choy N."/>
            <person name="Enju A."/>
            <person name="Goldsmith A.D."/>
            <person name="Gurjal M."/>
            <person name="Hansen N.F."/>
            <person name="Hayashizaki Y."/>
            <person name="Johnson-Hopson C."/>
            <person name="Hsuan V.W."/>
            <person name="Iida K."/>
            <person name="Karnes M."/>
            <person name="Khan S."/>
            <person name="Koesema E."/>
            <person name="Ishida J."/>
            <person name="Jiang P.X."/>
            <person name="Jones T."/>
            <person name="Kawai J."/>
            <person name="Kamiya A."/>
            <person name="Meyers C."/>
            <person name="Nakajima M."/>
            <person name="Narusaka M."/>
            <person name="Seki M."/>
            <person name="Sakurai T."/>
            <person name="Satou M."/>
            <person name="Tamse R."/>
            <person name="Vaysberg M."/>
            <person name="Wallender E.K."/>
            <person name="Wong C."/>
            <person name="Yamamura Y."/>
            <person name="Yuan S."/>
            <person name="Shinozaki K."/>
            <person name="Davis R.W."/>
            <person name="Theologis A."/>
            <person name="Ecker J.R."/>
        </authorList>
    </citation>
    <scope>NUCLEOTIDE SEQUENCE [LARGE SCALE MRNA]</scope>
    <source>
        <strain>cv. Columbia</strain>
    </source>
</reference>
<reference key="5">
    <citation type="journal article" date="2008" name="Biochem. J.">
        <title>Biochemical function of typical and variant Arabidopsis thaliana U-box E3 ubiquitin-protein ligases.</title>
        <authorList>
            <person name="Wiborg J."/>
            <person name="O'Shea C."/>
            <person name="Skriver K."/>
        </authorList>
    </citation>
    <scope>FUNCTION</scope>
    <scope>CATALYTIC ACTIVITY</scope>
    <scope>PATHWAY</scope>
</reference>
<reference key="6">
    <citation type="journal article" date="2008" name="Plant Cell">
        <title>Characterization of Arabidopsis and rice DWD proteins and their roles as substrate receptors for CUL4-RING E3 ubiquitin ligases.</title>
        <authorList>
            <person name="Lee J.H."/>
            <person name="Terzaghi W."/>
            <person name="Gusmaroli G."/>
            <person name="Charron J.B."/>
            <person name="Yoon H.J."/>
            <person name="Chen H."/>
            <person name="He Y.J."/>
            <person name="Xiong Y."/>
            <person name="Deng X.W."/>
        </authorList>
    </citation>
    <scope>DWD MOTIF</scope>
</reference>
<keyword id="KW-0025">Alternative splicing</keyword>
<keyword id="KW-0227">DNA damage</keyword>
<keyword id="KW-0234">DNA repair</keyword>
<keyword id="KW-0391">Immunity</keyword>
<keyword id="KW-0399">Innate immunity</keyword>
<keyword id="KW-0507">mRNA processing</keyword>
<keyword id="KW-0508">mRNA splicing</keyword>
<keyword id="KW-0539">Nucleus</keyword>
<keyword id="KW-0611">Plant defense</keyword>
<keyword id="KW-1185">Reference proteome</keyword>
<keyword id="KW-0677">Repeat</keyword>
<keyword id="KW-0747">Spliceosome</keyword>
<keyword id="KW-0808">Transferase</keyword>
<keyword id="KW-0833">Ubl conjugation pathway</keyword>
<keyword id="KW-0853">WD repeat</keyword>
<proteinExistence type="evidence at protein level"/>
<comment type="function">
    <text evidence="3 4 5">Probable ubiquitin-protein ligase which is mainly involved pre-mRNA splicing and DNA repair (By similarity). Component of the MAC complex that probably regulates defense responses through transcriptional control and thereby is essential for plant innate immunity.</text>
</comment>
<comment type="catalytic activity">
    <reaction evidence="4">
        <text>S-ubiquitinyl-[E2 ubiquitin-conjugating enzyme]-L-cysteine + [acceptor protein]-L-lysine = [E2 ubiquitin-conjugating enzyme]-L-cysteine + N(6)-ubiquitinyl-[acceptor protein]-L-lysine.</text>
        <dbReference type="EC" id="2.3.2.27"/>
    </reaction>
</comment>
<comment type="pathway">
    <text evidence="4">Protein modification; protein ubiquitination.</text>
</comment>
<comment type="subunit">
    <text evidence="2 3 5">Homotetramer. Component of the multiprotein assembly MOS4-associated complex (MAC) at least composed of MOS4, CDC5, PRL1 and PRP19 which is related to the PRP19C/Prp19 complex/NTC/Nineteen complex identified in other organisms. Associated with the spliceosome.</text>
</comment>
<comment type="subcellular location">
    <subcellularLocation>
        <location evidence="5">Nucleus</location>
    </subcellularLocation>
</comment>
<comment type="alternative products">
    <event type="alternative splicing"/>
    <isoform>
        <id>O22785-1</id>
        <name>1</name>
        <sequence type="displayed"/>
    </isoform>
    <text>A number of isoforms are produced. According to EST sequences.</text>
</comment>
<comment type="domain">
    <text evidence="1">The DWD box is required for interaction with DDB1A.</text>
</comment>
<comment type="similarity">
    <text evidence="6">Belongs to the WD repeat PRP19 family.</text>
</comment>
<comment type="sequence caution" evidence="6">
    <conflict type="erroneous gene model prediction">
        <sequence resource="EMBL-CDS" id="AAB80652"/>
    </conflict>
</comment>
<comment type="sequence caution" evidence="6">
    <conflict type="frameshift">
        <sequence resource="EMBL" id="AY080868"/>
    </conflict>
</comment>
<accession>O22785</accession>
<accession>C1KE07</accession>
<accession>Q3EBP5</accession>
<sequence length="525" mass="56728">MNCAISGEVPVEPVVSTKSGLLFERRLIERHISDYGKCPVTGEPLTIDDIVPIKTGEIIKPKTLHTASIPGLLGTFQNEWDGLMLSNFALEQQLHTARQELSHALYQHDSACRVIARLKKERDEARQLLAEVERHIPAAPEAVTANAALSNGKRAAVDEELGPDAKKLCPGISAEIITELTDCNAALSQKRKKRQIPQTLASIDTLERFTQLSSHPLHKTNKPGICSMDILHSKDVIATGGVDATAVLFDRPSGQILSTLTGHSKKVTSVKFVGDSDLVLTASADKTVRIWRNPGDGNYACGYTLNDHSAEVRAVTVHPTNKYFVSASLDGTWCFYDLSSGSCLAQVSDDSKNVDYTAAAFHPDGLILGTGTSQSVVKIWDVKSQANVAKFDGHTGEVTAISFSENGYFLATAAEDGVRLWDLRKLRNFKSFLSADANSVEFDPSGSYLGIAASDIKVYQTASVKAEWNLIKTLPDLSGTGKATCVKFGSDAQYVAVGSMDRNLRIFGLPGDEKANVDDDSAQDS</sequence>
<protein>
    <recommendedName>
        <fullName evidence="6">Pre-mRNA-processing factor 19 homolog 2</fullName>
        <ecNumber evidence="4">2.3.2.27</ecNumber>
    </recommendedName>
    <alternativeName>
        <fullName>MOS4-associated complex protein 3B</fullName>
        <shortName>MAC protein 3B</shortName>
    </alternativeName>
    <alternativeName>
        <fullName>Plant U-box protein 60</fullName>
    </alternativeName>
    <alternativeName>
        <fullName evidence="6">RING-type E3 ubiquitin transferase PRP19 2</fullName>
    </alternativeName>
    <alternativeName>
        <fullName>U-box domain-containing protein 60</fullName>
    </alternativeName>
</protein>
<organism>
    <name type="scientific">Arabidopsis thaliana</name>
    <name type="common">Mouse-ear cress</name>
    <dbReference type="NCBI Taxonomy" id="3702"/>
    <lineage>
        <taxon>Eukaryota</taxon>
        <taxon>Viridiplantae</taxon>
        <taxon>Streptophyta</taxon>
        <taxon>Embryophyta</taxon>
        <taxon>Tracheophyta</taxon>
        <taxon>Spermatophyta</taxon>
        <taxon>Magnoliopsida</taxon>
        <taxon>eudicotyledons</taxon>
        <taxon>Gunneridae</taxon>
        <taxon>Pentapetalae</taxon>
        <taxon>rosids</taxon>
        <taxon>malvids</taxon>
        <taxon>Brassicales</taxon>
        <taxon>Brassicaceae</taxon>
        <taxon>Camelineae</taxon>
        <taxon>Arabidopsis</taxon>
    </lineage>
</organism>